<accession>P52041</accession>
<comment type="catalytic activity">
    <reaction evidence="2">
        <text>(3S)-3-hydroxybutanoyl-CoA + NADP(+) = acetoacetyl-CoA + NADPH + H(+)</text>
        <dbReference type="Rhea" id="RHEA:16197"/>
        <dbReference type="ChEBI" id="CHEBI:15378"/>
        <dbReference type="ChEBI" id="CHEBI:57286"/>
        <dbReference type="ChEBI" id="CHEBI:57316"/>
        <dbReference type="ChEBI" id="CHEBI:57783"/>
        <dbReference type="ChEBI" id="CHEBI:58349"/>
        <dbReference type="EC" id="1.1.1.157"/>
    </reaction>
</comment>
<comment type="pathway">
    <text>Lipid metabolism; butanoate metabolism.</text>
</comment>
<comment type="similarity">
    <text evidence="3">Belongs to the 3-hydroxyacyl-CoA dehydrogenase family.</text>
</comment>
<protein>
    <recommendedName>
        <fullName>3-hydroxybutyryl-CoA dehydrogenase</fullName>
        <ecNumber>1.1.1.157</ecNumber>
    </recommendedName>
    <alternativeName>
        <fullName>Beta-hydroxybutyryl-CoA dehydrogenase</fullName>
        <shortName>BHBD</shortName>
    </alternativeName>
</protein>
<evidence type="ECO:0000250" key="1"/>
<evidence type="ECO:0000269" key="2">
    <source>
    </source>
</evidence>
<evidence type="ECO:0000305" key="3"/>
<evidence type="ECO:0007829" key="4">
    <source>
        <dbReference type="PDB" id="6AA8"/>
    </source>
</evidence>
<evidence type="ECO:0007829" key="5">
    <source>
        <dbReference type="PDB" id="6ACQ"/>
    </source>
</evidence>
<gene>
    <name type="primary">hbd</name>
    <name type="ordered locus">CA_C2708</name>
</gene>
<organism>
    <name type="scientific">Clostridium acetobutylicum (strain ATCC 824 / DSM 792 / JCM 1419 / IAM 19013 / LMG 5710 / NBRC 13948 / NRRL B-527 / VKM B-1787 / 2291 / W)</name>
    <dbReference type="NCBI Taxonomy" id="272562"/>
    <lineage>
        <taxon>Bacteria</taxon>
        <taxon>Bacillati</taxon>
        <taxon>Bacillota</taxon>
        <taxon>Clostridia</taxon>
        <taxon>Eubacteriales</taxon>
        <taxon>Clostridiaceae</taxon>
        <taxon>Clostridium</taxon>
    </lineage>
</organism>
<sequence length="282" mass="30583">MKKVCVIGAGTMGSGIAQAFAAKGFEVVLRDIKDEFVDRGLDFINKNLSKLVKKGKIEEATKVEILTRISGTVDLNMAADCDLVIEAAVERMDIKKQIFADLDNICKPETILASNTSSLSITEVASATKRPDKVIGMHFFNPAPVMKLVEVIRGIATSQETFDAVKETSIAIGKDPVEVAEAPGFVVNRILIPMINEAVGILAEGIASVEDIDKAMKLGANHPMGPLELGDFIGLDICLAIMDVLYSETGDSKYRPHTLLKKYVRAGWLGRKSGKGFYDYSK</sequence>
<keyword id="KW-0002">3D-structure</keyword>
<keyword id="KW-0276">Fatty acid metabolism</keyword>
<keyword id="KW-0443">Lipid metabolism</keyword>
<keyword id="KW-0521">NADP</keyword>
<keyword id="KW-0560">Oxidoreductase</keyword>
<keyword id="KW-1185">Reference proteome</keyword>
<dbReference type="EC" id="1.1.1.157"/>
<dbReference type="EMBL" id="U17110">
    <property type="protein sequence ID" value="AAA95971.1"/>
    <property type="molecule type" value="Genomic_DNA"/>
</dbReference>
<dbReference type="EMBL" id="AE001437">
    <property type="protein sequence ID" value="AAK80654.1"/>
    <property type="molecule type" value="Genomic_DNA"/>
</dbReference>
<dbReference type="PIR" id="C97233">
    <property type="entry name" value="C97233"/>
</dbReference>
<dbReference type="PIR" id="T47265">
    <property type="entry name" value="T47265"/>
</dbReference>
<dbReference type="RefSeq" id="NP_349314.1">
    <property type="nucleotide sequence ID" value="NC_003030.1"/>
</dbReference>
<dbReference type="RefSeq" id="WP_010965995.1">
    <property type="nucleotide sequence ID" value="NC_003030.1"/>
</dbReference>
<dbReference type="PDB" id="6AA8">
    <property type="method" value="X-ray"/>
    <property type="resolution" value="2.10 A"/>
    <property type="chains" value="A/B/C/D/E/F=1-282"/>
</dbReference>
<dbReference type="PDB" id="6ACQ">
    <property type="method" value="X-ray"/>
    <property type="resolution" value="2.50 A"/>
    <property type="chains" value="A/B/C/D/E/F=1-282"/>
</dbReference>
<dbReference type="PDBsum" id="6AA8"/>
<dbReference type="PDBsum" id="6ACQ"/>
<dbReference type="SMR" id="P52041"/>
<dbReference type="STRING" id="272562.CA_C2708"/>
<dbReference type="KEGG" id="cac:CA_C2708"/>
<dbReference type="PATRIC" id="fig|272562.8.peg.2898"/>
<dbReference type="eggNOG" id="COG1250">
    <property type="taxonomic scope" value="Bacteria"/>
</dbReference>
<dbReference type="HOGENOM" id="CLU_009834_2_0_9"/>
<dbReference type="OrthoDB" id="9771883at2"/>
<dbReference type="BioCyc" id="MetaCyc:MONOMER-16803"/>
<dbReference type="UniPathway" id="UPA00863"/>
<dbReference type="Proteomes" id="UP000000814">
    <property type="component" value="Chromosome"/>
</dbReference>
<dbReference type="GO" id="GO:0008691">
    <property type="term" value="F:3-hydroxybutyryl-CoA dehydrogenase activity"/>
    <property type="evidence" value="ECO:0007669"/>
    <property type="project" value="UniProtKB-EC"/>
</dbReference>
<dbReference type="GO" id="GO:0070403">
    <property type="term" value="F:NAD+ binding"/>
    <property type="evidence" value="ECO:0007669"/>
    <property type="project" value="InterPro"/>
</dbReference>
<dbReference type="GO" id="GO:0019605">
    <property type="term" value="P:butyrate metabolic process"/>
    <property type="evidence" value="ECO:0007669"/>
    <property type="project" value="UniProtKB-UniPathway"/>
</dbReference>
<dbReference type="GO" id="GO:0006635">
    <property type="term" value="P:fatty acid beta-oxidation"/>
    <property type="evidence" value="ECO:0007669"/>
    <property type="project" value="TreeGrafter"/>
</dbReference>
<dbReference type="FunFam" id="3.40.50.720:FF:000009">
    <property type="entry name" value="Fatty oxidation complex, alpha subunit"/>
    <property type="match status" value="1"/>
</dbReference>
<dbReference type="Gene3D" id="1.10.1040.10">
    <property type="entry name" value="N-(1-d-carboxylethyl)-l-norvaline Dehydrogenase, domain 2"/>
    <property type="match status" value="1"/>
</dbReference>
<dbReference type="Gene3D" id="3.40.50.720">
    <property type="entry name" value="NAD(P)-binding Rossmann-like Domain"/>
    <property type="match status" value="1"/>
</dbReference>
<dbReference type="InterPro" id="IPR022694">
    <property type="entry name" value="3-OHacyl-CoA_DH"/>
</dbReference>
<dbReference type="InterPro" id="IPR006180">
    <property type="entry name" value="3-OHacyl-CoA_DH_CS"/>
</dbReference>
<dbReference type="InterPro" id="IPR006176">
    <property type="entry name" value="3-OHacyl-CoA_DH_NAD-bd"/>
</dbReference>
<dbReference type="InterPro" id="IPR006108">
    <property type="entry name" value="3HC_DH_C"/>
</dbReference>
<dbReference type="InterPro" id="IPR008927">
    <property type="entry name" value="6-PGluconate_DH-like_C_sf"/>
</dbReference>
<dbReference type="InterPro" id="IPR013328">
    <property type="entry name" value="6PGD_dom2"/>
</dbReference>
<dbReference type="InterPro" id="IPR036291">
    <property type="entry name" value="NAD(P)-bd_dom_sf"/>
</dbReference>
<dbReference type="NCBIfam" id="NF004474">
    <property type="entry name" value="PRK05808.1"/>
    <property type="match status" value="1"/>
</dbReference>
<dbReference type="NCBIfam" id="NF005875">
    <property type="entry name" value="PRK07819.1"/>
    <property type="match status" value="1"/>
</dbReference>
<dbReference type="PANTHER" id="PTHR48075">
    <property type="entry name" value="3-HYDROXYACYL-COA DEHYDROGENASE FAMILY PROTEIN"/>
    <property type="match status" value="1"/>
</dbReference>
<dbReference type="PANTHER" id="PTHR48075:SF5">
    <property type="entry name" value="3-HYDROXYBUTYRYL-COA DEHYDROGENASE"/>
    <property type="match status" value="1"/>
</dbReference>
<dbReference type="Pfam" id="PF00725">
    <property type="entry name" value="3HCDH"/>
    <property type="match status" value="1"/>
</dbReference>
<dbReference type="Pfam" id="PF02737">
    <property type="entry name" value="3HCDH_N"/>
    <property type="match status" value="1"/>
</dbReference>
<dbReference type="PIRSF" id="PIRSF000105">
    <property type="entry name" value="HCDH"/>
    <property type="match status" value="1"/>
</dbReference>
<dbReference type="SUPFAM" id="SSF48179">
    <property type="entry name" value="6-phosphogluconate dehydrogenase C-terminal domain-like"/>
    <property type="match status" value="1"/>
</dbReference>
<dbReference type="SUPFAM" id="SSF51735">
    <property type="entry name" value="NAD(P)-binding Rossmann-fold domains"/>
    <property type="match status" value="1"/>
</dbReference>
<dbReference type="PROSITE" id="PS00067">
    <property type="entry name" value="3HCDH"/>
    <property type="match status" value="1"/>
</dbReference>
<feature type="chain" id="PRO_0000109257" description="3-hydroxybutyryl-CoA dehydrogenase">
    <location>
        <begin position="1"/>
        <end position="282"/>
    </location>
</feature>
<feature type="site" description="Important for catalytic activity" evidence="1">
    <location>
        <position position="138"/>
    </location>
</feature>
<feature type="sequence conflict" description="In Ref. 1; AAA95971." evidence="3" ref="1">
    <original>RP</original>
    <variation>TN</variation>
    <location>
        <begin position="130"/>
        <end position="131"/>
    </location>
</feature>
<feature type="strand" evidence="4">
    <location>
        <begin position="3"/>
        <end position="7"/>
    </location>
</feature>
<feature type="helix" evidence="4">
    <location>
        <begin position="11"/>
        <end position="22"/>
    </location>
</feature>
<feature type="strand" evidence="4">
    <location>
        <begin position="26"/>
        <end position="30"/>
    </location>
</feature>
<feature type="helix" evidence="4">
    <location>
        <begin position="34"/>
        <end position="53"/>
    </location>
</feature>
<feature type="helix" evidence="4">
    <location>
        <begin position="59"/>
        <end position="67"/>
    </location>
</feature>
<feature type="strand" evidence="4">
    <location>
        <begin position="69"/>
        <end position="73"/>
    </location>
</feature>
<feature type="helix" evidence="4">
    <location>
        <begin position="75"/>
        <end position="78"/>
    </location>
</feature>
<feature type="strand" evidence="4">
    <location>
        <begin position="82"/>
        <end position="86"/>
    </location>
</feature>
<feature type="helix" evidence="4">
    <location>
        <begin position="92"/>
        <end position="105"/>
    </location>
</feature>
<feature type="strand" evidence="4">
    <location>
        <begin position="111"/>
        <end position="114"/>
    </location>
</feature>
<feature type="strand" evidence="5">
    <location>
        <begin position="117"/>
        <end position="119"/>
    </location>
</feature>
<feature type="helix" evidence="4">
    <location>
        <begin position="121"/>
        <end position="125"/>
    </location>
</feature>
<feature type="helix" evidence="4">
    <location>
        <begin position="131"/>
        <end position="133"/>
    </location>
</feature>
<feature type="strand" evidence="4">
    <location>
        <begin position="134"/>
        <end position="139"/>
    </location>
</feature>
<feature type="turn" evidence="4">
    <location>
        <begin position="143"/>
        <end position="145"/>
    </location>
</feature>
<feature type="strand" evidence="4">
    <location>
        <begin position="148"/>
        <end position="153"/>
    </location>
</feature>
<feature type="helix" evidence="4">
    <location>
        <begin position="159"/>
        <end position="171"/>
    </location>
</feature>
<feature type="strand" evidence="4">
    <location>
        <begin position="175"/>
        <end position="181"/>
    </location>
</feature>
<feature type="turn" evidence="4">
    <location>
        <begin position="183"/>
        <end position="186"/>
    </location>
</feature>
<feature type="helix" evidence="4">
    <location>
        <begin position="187"/>
        <end position="203"/>
    </location>
</feature>
<feature type="helix" evidence="4">
    <location>
        <begin position="209"/>
        <end position="219"/>
    </location>
</feature>
<feature type="helix" evidence="4">
    <location>
        <begin position="226"/>
        <end position="233"/>
    </location>
</feature>
<feature type="helix" evidence="4">
    <location>
        <begin position="235"/>
        <end position="249"/>
    </location>
</feature>
<feature type="helix" evidence="4">
    <location>
        <begin position="252"/>
        <end position="254"/>
    </location>
</feature>
<feature type="helix" evidence="4">
    <location>
        <begin position="258"/>
        <end position="265"/>
    </location>
</feature>
<feature type="helix" evidence="4">
    <location>
        <begin position="271"/>
        <end position="273"/>
    </location>
</feature>
<feature type="strand" evidence="4">
    <location>
        <begin position="275"/>
        <end position="279"/>
    </location>
</feature>
<name>HBD_CLOAB</name>
<reference key="1">
    <citation type="journal article" date="1996" name="J. Bacteriol.">
        <title>Cloning, sequencing, and expression of clustered genes encoding beta-hydroxybutyryl-coenzyme A (CoA) dehydrogenase, crotonase, and butyryl-CoA dehydrogenase from Clostridium acetobutylicum ATCC 824.</title>
        <authorList>
            <person name="Boynton Z.L."/>
            <person name="Bennett G.N."/>
            <person name="Rudolph F.B."/>
        </authorList>
    </citation>
    <scope>NUCLEOTIDE SEQUENCE [GENOMIC DNA]</scope>
    <scope>CATALYTIC ACTIVITY</scope>
    <source>
        <strain>ATCC 824 / DSM 792 / JCM 1419 / IAM 19013 / LMG 5710 / NBRC 13948 / NRRL B-527 / VKM B-1787 / 2291 / W</strain>
    </source>
</reference>
<reference key="2">
    <citation type="journal article" date="2001" name="J. Bacteriol.">
        <title>Genome sequence and comparative analysis of the solvent-producing bacterium Clostridium acetobutylicum.</title>
        <authorList>
            <person name="Noelling J."/>
            <person name="Breton G."/>
            <person name="Omelchenko M.V."/>
            <person name="Makarova K.S."/>
            <person name="Zeng Q."/>
            <person name="Gibson R."/>
            <person name="Lee H.M."/>
            <person name="Dubois J."/>
            <person name="Qiu D."/>
            <person name="Hitti J."/>
            <person name="Wolf Y.I."/>
            <person name="Tatusov R.L."/>
            <person name="Sabathe F."/>
            <person name="Doucette-Stamm L.A."/>
            <person name="Soucaille P."/>
            <person name="Daly M.J."/>
            <person name="Bennett G.N."/>
            <person name="Koonin E.V."/>
            <person name="Smith D.R."/>
        </authorList>
    </citation>
    <scope>NUCLEOTIDE SEQUENCE [LARGE SCALE GENOMIC DNA]</scope>
    <source>
        <strain>ATCC 824 / DSM 792 / JCM 1419 / IAM 19013 / LMG 5710 / NBRC 13948 / NRRL B-527 / VKM B-1787 / 2291 / W</strain>
    </source>
</reference>
<proteinExistence type="evidence at protein level"/>